<protein>
    <recommendedName>
        <fullName>Heat shock protein hsp9</fullName>
    </recommendedName>
</protein>
<accession>P50519</accession>
<accession>Q09186</accession>
<organism>
    <name type="scientific">Schizosaccharomyces pombe (strain 972 / ATCC 24843)</name>
    <name type="common">Fission yeast</name>
    <dbReference type="NCBI Taxonomy" id="284812"/>
    <lineage>
        <taxon>Eukaryota</taxon>
        <taxon>Fungi</taxon>
        <taxon>Dikarya</taxon>
        <taxon>Ascomycota</taxon>
        <taxon>Taphrinomycotina</taxon>
        <taxon>Schizosaccharomycetes</taxon>
        <taxon>Schizosaccharomycetales</taxon>
        <taxon>Schizosaccharomycetaceae</taxon>
        <taxon>Schizosaccharomyces</taxon>
    </lineage>
</organism>
<dbReference type="EMBL" id="U34953">
    <property type="protein sequence ID" value="AAB08436.1"/>
    <property type="molecule type" value="mRNA"/>
</dbReference>
<dbReference type="EMBL" id="L29213">
    <property type="protein sequence ID" value="AAB53442.1"/>
    <property type="status" value="ALT_FRAME"/>
    <property type="molecule type" value="Genomic_DNA"/>
</dbReference>
<dbReference type="EMBL" id="CU329670">
    <property type="protein sequence ID" value="CAB55171.1"/>
    <property type="molecule type" value="Genomic_DNA"/>
</dbReference>
<dbReference type="PIR" id="JC4826">
    <property type="entry name" value="JC4826"/>
</dbReference>
<dbReference type="PIR" id="S70363">
    <property type="entry name" value="S70363"/>
</dbReference>
<dbReference type="RefSeq" id="NP_594943.1">
    <property type="nucleotide sequence ID" value="NM_001020374.2"/>
</dbReference>
<dbReference type="SMR" id="P50519"/>
<dbReference type="BioGRID" id="278517">
    <property type="interactions" value="16"/>
</dbReference>
<dbReference type="FunCoup" id="P50519">
    <property type="interactions" value="9"/>
</dbReference>
<dbReference type="STRING" id="284812.P50519"/>
<dbReference type="iPTMnet" id="P50519"/>
<dbReference type="PaxDb" id="4896-SPAP8A3.04c.1"/>
<dbReference type="EnsemblFungi" id="SPAP8A3.04c.1">
    <property type="protein sequence ID" value="SPAP8A3.04c.1:pep"/>
    <property type="gene ID" value="SPAP8A3.04c"/>
</dbReference>
<dbReference type="GeneID" id="2542035"/>
<dbReference type="KEGG" id="spo:2542035"/>
<dbReference type="PomBase" id="SPAP8A3.04c">
    <property type="gene designation" value="hsp9"/>
</dbReference>
<dbReference type="VEuPathDB" id="FungiDB:SPAP8A3.04c"/>
<dbReference type="eggNOG" id="ENOG502SDMM">
    <property type="taxonomic scope" value="Eukaryota"/>
</dbReference>
<dbReference type="HOGENOM" id="CLU_102617_2_0_1"/>
<dbReference type="InParanoid" id="P50519"/>
<dbReference type="OMA" id="RSHDNHA"/>
<dbReference type="PhylomeDB" id="P50519"/>
<dbReference type="PRO" id="PR:P50519"/>
<dbReference type="Proteomes" id="UP000002485">
    <property type="component" value="Chromosome I"/>
</dbReference>
<dbReference type="GO" id="GO:0005737">
    <property type="term" value="C:cytoplasm"/>
    <property type="evidence" value="ECO:0000314"/>
    <property type="project" value="PomBase"/>
</dbReference>
<dbReference type="GO" id="GO:0005829">
    <property type="term" value="C:cytosol"/>
    <property type="evidence" value="ECO:0007005"/>
    <property type="project" value="PomBase"/>
</dbReference>
<dbReference type="GO" id="GO:0005634">
    <property type="term" value="C:nucleus"/>
    <property type="evidence" value="ECO:0000314"/>
    <property type="project" value="PomBase"/>
</dbReference>
<dbReference type="GO" id="GO:0005886">
    <property type="term" value="C:plasma membrane"/>
    <property type="evidence" value="ECO:0000318"/>
    <property type="project" value="GO_Central"/>
</dbReference>
<dbReference type="GO" id="GO:0008289">
    <property type="term" value="F:lipid binding"/>
    <property type="evidence" value="ECO:0000318"/>
    <property type="project" value="GO_Central"/>
</dbReference>
<dbReference type="Gene3D" id="6.10.280.100">
    <property type="match status" value="1"/>
</dbReference>
<dbReference type="InterPro" id="IPR007250">
    <property type="entry name" value="HSP9_HSP12"/>
</dbReference>
<dbReference type="Pfam" id="PF04119">
    <property type="entry name" value="HSP9_HSP12"/>
    <property type="match status" value="1"/>
</dbReference>
<dbReference type="PIRSF" id="PIRSF002590">
    <property type="entry name" value="HSP9/HSP12_fun"/>
    <property type="match status" value="1"/>
</dbReference>
<proteinExistence type="evidence at transcript level"/>
<feature type="chain" id="PRO_0000084082" description="Heat shock protein hsp9">
    <location>
        <begin position="1"/>
        <end position="68"/>
    </location>
</feature>
<feature type="region of interest" description="Disordered" evidence="1">
    <location>
        <begin position="1"/>
        <end position="32"/>
    </location>
</feature>
<feature type="region of interest" description="Disordered" evidence="1">
    <location>
        <begin position="44"/>
        <end position="68"/>
    </location>
</feature>
<feature type="compositionally biased region" description="Basic and acidic residues" evidence="1">
    <location>
        <begin position="1"/>
        <end position="18"/>
    </location>
</feature>
<feature type="compositionally biased region" description="Basic and acidic residues" evidence="1">
    <location>
        <begin position="47"/>
        <end position="68"/>
    </location>
</feature>
<keyword id="KW-1185">Reference proteome</keyword>
<keyword id="KW-0346">Stress response</keyword>
<gene>
    <name type="primary">hsp9</name>
    <name type="synonym">scf1</name>
    <name type="ORF">SPAP8A3.04c</name>
</gene>
<comment type="induction">
    <text evidence="2">Strongly induced by heat-shock, nitrogen limitation, and upon entry into the stationary phase.</text>
</comment>
<comment type="similarity">
    <text evidence="3">To yeast HSP12/GLP1 and C.albicans WH11.</text>
</comment>
<comment type="sequence caution" evidence="3">
    <conflict type="frameshift">
        <sequence resource="EMBL-CDS" id="AAB53442"/>
    </conflict>
</comment>
<sequence length="68" mass="7503">MSDPARKSFTEQGKEKMTPDSSKSTLDKAKESITGAYDKVASAFTSDEDKSTSQEAHDKAQRFVDDKL</sequence>
<evidence type="ECO:0000256" key="1">
    <source>
        <dbReference type="SAM" id="MobiDB-lite"/>
    </source>
</evidence>
<evidence type="ECO:0000269" key="2">
    <source>
    </source>
</evidence>
<evidence type="ECO:0000305" key="3"/>
<reference key="1">
    <citation type="journal article" date="1996" name="Biochim. Biophys. Acta">
        <title>Cloning, sequencing and regulation of a cDNA encoding a small heat-shock protein from Schizosaccharomyces pombe.</title>
        <authorList>
            <person name="Orlandi I."/>
            <person name="Cavadini P."/>
            <person name="Popolo L."/>
            <person name="Vai M."/>
        </authorList>
    </citation>
    <scope>NUCLEOTIDE SEQUENCE [MRNA]</scope>
</reference>
<reference key="2">
    <citation type="journal article" date="1996" name="Gene">
        <title>Isolation of an HSP12-homologous gene of Schizosaccharomyces pombe suppressing a temperature-sensitive mutant allele of cdc4.</title>
        <authorList>
            <person name="Jang Y.-J."/>
            <person name="Park S.-K."/>
            <person name="Yoo H.-S."/>
        </authorList>
    </citation>
    <scope>NUCLEOTIDE SEQUENCE [GENOMIC DNA]</scope>
    <scope>INDUCTION</scope>
</reference>
<reference key="3">
    <citation type="journal article" date="2002" name="Nature">
        <title>The genome sequence of Schizosaccharomyces pombe.</title>
        <authorList>
            <person name="Wood V."/>
            <person name="Gwilliam R."/>
            <person name="Rajandream M.A."/>
            <person name="Lyne M.H."/>
            <person name="Lyne R."/>
            <person name="Stewart A."/>
            <person name="Sgouros J.G."/>
            <person name="Peat N."/>
            <person name="Hayles J."/>
            <person name="Baker S.G."/>
            <person name="Basham D."/>
            <person name="Bowman S."/>
            <person name="Brooks K."/>
            <person name="Brown D."/>
            <person name="Brown S."/>
            <person name="Chillingworth T."/>
            <person name="Churcher C.M."/>
            <person name="Collins M."/>
            <person name="Connor R."/>
            <person name="Cronin A."/>
            <person name="Davis P."/>
            <person name="Feltwell T."/>
            <person name="Fraser A."/>
            <person name="Gentles S."/>
            <person name="Goble A."/>
            <person name="Hamlin N."/>
            <person name="Harris D.E."/>
            <person name="Hidalgo J."/>
            <person name="Hodgson G."/>
            <person name="Holroyd S."/>
            <person name="Hornsby T."/>
            <person name="Howarth S."/>
            <person name="Huckle E.J."/>
            <person name="Hunt S."/>
            <person name="Jagels K."/>
            <person name="James K.D."/>
            <person name="Jones L."/>
            <person name="Jones M."/>
            <person name="Leather S."/>
            <person name="McDonald S."/>
            <person name="McLean J."/>
            <person name="Mooney P."/>
            <person name="Moule S."/>
            <person name="Mungall K.L."/>
            <person name="Murphy L.D."/>
            <person name="Niblett D."/>
            <person name="Odell C."/>
            <person name="Oliver K."/>
            <person name="O'Neil S."/>
            <person name="Pearson D."/>
            <person name="Quail M.A."/>
            <person name="Rabbinowitsch E."/>
            <person name="Rutherford K.M."/>
            <person name="Rutter S."/>
            <person name="Saunders D."/>
            <person name="Seeger K."/>
            <person name="Sharp S."/>
            <person name="Skelton J."/>
            <person name="Simmonds M.N."/>
            <person name="Squares R."/>
            <person name="Squares S."/>
            <person name="Stevens K."/>
            <person name="Taylor K."/>
            <person name="Taylor R.G."/>
            <person name="Tivey A."/>
            <person name="Walsh S.V."/>
            <person name="Warren T."/>
            <person name="Whitehead S."/>
            <person name="Woodward J.R."/>
            <person name="Volckaert G."/>
            <person name="Aert R."/>
            <person name="Robben J."/>
            <person name="Grymonprez B."/>
            <person name="Weltjens I."/>
            <person name="Vanstreels E."/>
            <person name="Rieger M."/>
            <person name="Schaefer M."/>
            <person name="Mueller-Auer S."/>
            <person name="Gabel C."/>
            <person name="Fuchs M."/>
            <person name="Duesterhoeft A."/>
            <person name="Fritzc C."/>
            <person name="Holzer E."/>
            <person name="Moestl D."/>
            <person name="Hilbert H."/>
            <person name="Borzym K."/>
            <person name="Langer I."/>
            <person name="Beck A."/>
            <person name="Lehrach H."/>
            <person name="Reinhardt R."/>
            <person name="Pohl T.M."/>
            <person name="Eger P."/>
            <person name="Zimmermann W."/>
            <person name="Wedler H."/>
            <person name="Wambutt R."/>
            <person name="Purnelle B."/>
            <person name="Goffeau A."/>
            <person name="Cadieu E."/>
            <person name="Dreano S."/>
            <person name="Gloux S."/>
            <person name="Lelaure V."/>
            <person name="Mottier S."/>
            <person name="Galibert F."/>
            <person name="Aves S.J."/>
            <person name="Xiang Z."/>
            <person name="Hunt C."/>
            <person name="Moore K."/>
            <person name="Hurst S.M."/>
            <person name="Lucas M."/>
            <person name="Rochet M."/>
            <person name="Gaillardin C."/>
            <person name="Tallada V.A."/>
            <person name="Garzon A."/>
            <person name="Thode G."/>
            <person name="Daga R.R."/>
            <person name="Cruzado L."/>
            <person name="Jimenez J."/>
            <person name="Sanchez M."/>
            <person name="del Rey F."/>
            <person name="Benito J."/>
            <person name="Dominguez A."/>
            <person name="Revuelta J.L."/>
            <person name="Moreno S."/>
            <person name="Armstrong J."/>
            <person name="Forsburg S.L."/>
            <person name="Cerutti L."/>
            <person name="Lowe T."/>
            <person name="McCombie W.R."/>
            <person name="Paulsen I."/>
            <person name="Potashkin J."/>
            <person name="Shpakovski G.V."/>
            <person name="Ussery D."/>
            <person name="Barrell B.G."/>
            <person name="Nurse P."/>
        </authorList>
    </citation>
    <scope>NUCLEOTIDE SEQUENCE [LARGE SCALE GENOMIC DNA]</scope>
    <source>
        <strain>972 / ATCC 24843</strain>
    </source>
</reference>
<name>HSP9_SCHPO</name>